<keyword id="KW-0091">Biomineralization</keyword>
<keyword id="KW-0408">Iron</keyword>
<keyword id="KW-1281">Magnetosome</keyword>
<keyword id="KW-0472">Membrane</keyword>
<keyword id="KW-0479">Metal-binding</keyword>
<keyword id="KW-1185">Reference proteome</keyword>
<keyword id="KW-0812">Transmembrane</keyword>
<keyword id="KW-1133">Transmembrane helix</keyword>
<sequence>MGEMEREGATAKVGAGKVGAGKVGAAKAGAAPAAAQGAGTKVVAAQGAGTKVVAAQGAGAKAAAVGVGKVGAGAKAVGGTIWSGKGLALGLGMGLGAWGPLILGVVGAGAVYAYMKSRDIEAAQSDEEVELRDALS</sequence>
<accession>Q6NE76</accession>
<accession>V6F5K9</accession>
<protein>
    <recommendedName>
        <fullName evidence="9">Magnetite biomineralization protein Mms6</fullName>
    </recommendedName>
    <alternativeName>
        <fullName evidence="9">Magnetosome protein Mms6</fullName>
    </alternativeName>
</protein>
<name>MMS6_MAGGM</name>
<feature type="chain" id="PRO_0000447814" description="Magnetite biomineralization protein Mms6">
    <location>
        <begin position="1"/>
        <end position="136"/>
    </location>
</feature>
<feature type="topological domain" description="Cytoplasmic" evidence="9">
    <location>
        <begin position="1"/>
        <end position="85"/>
    </location>
</feature>
<feature type="transmembrane region" description="Helical" evidence="2">
    <location>
        <begin position="86"/>
        <end position="106"/>
    </location>
</feature>
<feature type="topological domain" description="Lumenal" evidence="9">
    <location>
        <begin position="107"/>
        <end position="136"/>
    </location>
</feature>
<feature type="region of interest" description="GL repeat" evidence="9">
    <location>
        <begin position="86"/>
        <end position="95"/>
    </location>
</feature>
<feature type="region of interest" description="MIC, self-assembles, binds magnetite, Fe(2+) and Fe(3+)" evidence="1">
    <location>
        <begin position="115"/>
        <end position="136"/>
    </location>
</feature>
<comment type="function">
    <text evidence="1 6 13">Promotes the formation of magnetite in Fe(2+)-rich conditions, when magnetite is not readily formed. Binds both Fe(2+) and Fe(3+). May help control the production of crystals with a specific morphology (By similarity). May function with MamX, MamY amd MamZ in biomineralization (Probable). The 4 genes of this operon collectively influence magnetosome size and number (PubMed:24816605).</text>
</comment>
<comment type="subunit">
    <text evidence="1">Full length protein oligomerizes and interacts with MamA.</text>
</comment>
<comment type="subcellular location">
    <subcellularLocation>
        <location evidence="4">Magnetosome membrane</location>
        <topology evidence="2">Single-pass membrane protein</topology>
    </subcellularLocation>
</comment>
<comment type="induction">
    <text evidence="7 11 12">Low levels of protein are associated with magnetosomes as they start to develop, rises to a maximum as the magnetosomes mature and then decreases (at protein level) (PubMed:30367002). Part of the probable mms6 operon (Probable).</text>
</comment>
<comment type="domain">
    <text evidence="1">The C-terminal 21 residues (later called magnetite-interacting component, MIC, residues 112-133) self assemble into multimers up to octamers; this fragment binds Fe(3+) which alters its structure. Also binds Fe(2+).</text>
</comment>
<comment type="PTM">
    <text evidence="1">May undergo cleavage.</text>
</comment>
<comment type="disruption phenotype">
    <text evidence="3 5 6">Normal magnetic response, slightly fewer, slightly smaller magnetosomes. A double mms6-mmsF deletion has an intermediate magnetic response, with slightly smaller and fewer magnetosomes than the single mutation (PubMed:24816605). Deletion of the 4 gene operon (mms6, mmsF, mms36 and mms48) gives an intermediate magnetic response with fewer, smaller magnetosomes in irregular pseudo-chains (PubMed:22043287, PubMed:24816605). Deletion of approximately 80 kb of DNA, including this gene, leads to cells that are non-magnetic, lack internal membrane systems, grow poorly, have reduced mobility and take-up and accumulate iron poorly (PubMed:13129949).</text>
</comment>
<comment type="miscellaneous">
    <text evidence="10">This bacteria makes up to 60 cubo-octahedral magnetosomes of about 45 nm in diameter which contain membrane-bound crystals of magnetite (Fe(3)O(4)).</text>
</comment>
<comment type="similarity">
    <text evidence="9">Belongs to the magnetosome Mms6 family.</text>
</comment>
<comment type="sequence caution" evidence="9">
    <conflict type="erroneous initiation">
        <sequence resource="EMBL-CDS" id="CDK99611"/>
    </conflict>
    <text>Extended N-terminus.</text>
</comment>
<evidence type="ECO:0000250" key="1">
    <source>
        <dbReference type="UniProtKB" id="Q2W8R5"/>
    </source>
</evidence>
<evidence type="ECO:0000255" key="2"/>
<evidence type="ECO:0000269" key="3">
    <source>
    </source>
</evidence>
<evidence type="ECO:0000269" key="4">
    <source>
    </source>
</evidence>
<evidence type="ECO:0000269" key="5">
    <source>
    </source>
</evidence>
<evidence type="ECO:0000269" key="6">
    <source>
    </source>
</evidence>
<evidence type="ECO:0000269" key="7">
    <source>
    </source>
</evidence>
<evidence type="ECO:0000303" key="8">
    <source>
    </source>
</evidence>
<evidence type="ECO:0000305" key="9"/>
<evidence type="ECO:0000305" key="10">
    <source>
    </source>
</evidence>
<evidence type="ECO:0000305" key="11">
    <source>
    </source>
</evidence>
<evidence type="ECO:0000305" key="12">
    <source>
    </source>
</evidence>
<evidence type="ECO:0000305" key="13">
    <source>
    </source>
</evidence>
<dbReference type="EMBL" id="BX571797">
    <property type="protein sequence ID" value="CAE12017.1"/>
    <property type="molecule type" value="Genomic_DNA"/>
</dbReference>
<dbReference type="EMBL" id="HG794546">
    <property type="protein sequence ID" value="CDK99611.1"/>
    <property type="status" value="ALT_INIT"/>
    <property type="molecule type" value="Genomic_DNA"/>
</dbReference>
<dbReference type="STRING" id="1430440.MGMSRv2__2396"/>
<dbReference type="KEGG" id="mgy:MGMSRv2__2396"/>
<dbReference type="HOGENOM" id="CLU_1675763_0_0_5"/>
<dbReference type="Proteomes" id="UP000018922">
    <property type="component" value="Chromosome I"/>
</dbReference>
<dbReference type="GO" id="GO:0110145">
    <property type="term" value="C:magnetosome lumen"/>
    <property type="evidence" value="ECO:0000314"/>
    <property type="project" value="UniProtKB"/>
</dbReference>
<dbReference type="GO" id="GO:0110146">
    <property type="term" value="C:magnetosome membrane"/>
    <property type="evidence" value="ECO:0007669"/>
    <property type="project" value="UniProtKB-SubCell"/>
</dbReference>
<dbReference type="GO" id="GO:0046872">
    <property type="term" value="F:metal ion binding"/>
    <property type="evidence" value="ECO:0007669"/>
    <property type="project" value="UniProtKB-KW"/>
</dbReference>
<dbReference type="InterPro" id="IPR053517">
    <property type="entry name" value="Magnetite_Biomin-Domain"/>
</dbReference>
<dbReference type="NCBIfam" id="NF040917">
    <property type="entry name" value="Mms6"/>
    <property type="match status" value="1"/>
</dbReference>
<reference key="1">
    <citation type="journal article" date="2003" name="J. Bacteriol.">
        <title>Characterization of a spontaneous nonmagnetic mutant of Magnetospirillum gryphiswaldense reveals a large deletion comprising a putative magnetosome island.</title>
        <authorList>
            <person name="Schuebbe S."/>
            <person name="Kube M."/>
            <person name="Scheffel A."/>
            <person name="Wawer C."/>
            <person name="Heyen U."/>
            <person name="Meyerdierks A."/>
            <person name="Madkour M.H."/>
            <person name="Mayer F."/>
            <person name="Reinhardt R."/>
            <person name="Schueler D."/>
        </authorList>
    </citation>
    <scope>NUCLEOTIDE SEQUENCE [GENOMIC DNA]</scope>
    <scope>DISRUPTION PHENOTYPE</scope>
    <source>
        <strain>DSM 6361 / JCM 21280 / NBRC 15271 / MSR-1</strain>
    </source>
</reference>
<reference key="2">
    <citation type="journal article" date="2014" name="Genome Announc.">
        <title>Complete genome sequence of Magnetospirillum gryphiswaldense MSR-1.</title>
        <authorList>
            <person name="Wang X."/>
            <person name="Wang Q."/>
            <person name="Zhang W."/>
            <person name="Wang Y."/>
            <person name="Li L."/>
            <person name="Wen T."/>
            <person name="Zhang T."/>
            <person name="Zhang Y."/>
            <person name="Xu J."/>
            <person name="Hu J."/>
            <person name="Li S."/>
            <person name="Liu L."/>
            <person name="Liu J."/>
            <person name="Jiang W."/>
            <person name="Tian J."/>
            <person name="Li Y."/>
            <person name="Schuler D."/>
            <person name="Wang L."/>
            <person name="Li J."/>
        </authorList>
    </citation>
    <scope>NUCLEOTIDE SEQUENCE [LARGE SCALE GENOMIC DNA]</scope>
    <source>
        <strain>DSM 6361 / JCM 21280 / NBRC 15271 / MSR-1</strain>
    </source>
</reference>
<reference key="3">
    <citation type="journal article" date="2004" name="Appl. Environ. Microbiol.">
        <title>Biochemical and proteomic analysis of the magnetosome membrane in Magnetospirillum gryphiswaldense.</title>
        <authorList>
            <person name="Gruenberg K."/>
            <person name="Mueller E.C."/>
            <person name="Otto A."/>
            <person name="Reszka R."/>
            <person name="Linder D."/>
            <person name="Kube M."/>
            <person name="Reinhardt R."/>
            <person name="Schueler D."/>
        </authorList>
    </citation>
    <scope>SUBCELLULAR LOCATION</scope>
    <scope>IDENTIFICATION BY MASS SPECTROMETRY</scope>
    <source>
        <strain>DSM 6361 / JCM 21280 / NBRC 15271 / MSR-1</strain>
    </source>
</reference>
<reference key="4">
    <citation type="journal article" date="2011" name="PLoS ONE">
        <title>Functional analysis of the magnetosome island in Magnetospirillum gryphiswaldense: the mamAB operon is sufficient for magnetite biomineralization.</title>
        <authorList>
            <person name="Lohsse A."/>
            <person name="Ullrich S."/>
            <person name="Katzmann E."/>
            <person name="Borg S."/>
            <person name="Wanner G."/>
            <person name="Richter M."/>
            <person name="Voigt B."/>
            <person name="Schweder T."/>
            <person name="Schueler D."/>
        </authorList>
    </citation>
    <scope>PROBABLE OPERON</scope>
    <scope>DISRUPTION PHENOTYPE</scope>
    <source>
        <strain>DSM 6361 / JCM 21280 / NBRC 15271 / MSR-1</strain>
    </source>
</reference>
<reference key="5">
    <citation type="journal article" date="2014" name="J. Bacteriol.">
        <title>Genetic dissection of the mamAB and mms6 operons reveals a gene set essential for magnetosome biogenesis in Magnetospirillum gryphiswaldense.</title>
        <authorList>
            <person name="Lohsse A."/>
            <person name="Borg S."/>
            <person name="Raschdorf O."/>
            <person name="Kolinko I."/>
            <person name="Tompa E."/>
            <person name="Posfai M."/>
            <person name="Faivre D."/>
            <person name="Baumgartner J."/>
            <person name="Schueler D."/>
        </authorList>
    </citation>
    <scope>FUNCTION</scope>
    <scope>PROBABLE OPERON</scope>
    <scope>DISRUPTION PHENOTYPE</scope>
    <source>
        <strain>DSM 6361 / JCM 21280 / NBRC 15271 / MSR-1</strain>
    </source>
</reference>
<reference key="6">
    <citation type="journal article" date="2019" name="Appl. Environ. Microbiol.">
        <title>Work Patterns of MamXY Proteins during Magnetosome Formation in Magnetospirillum gryphiswaldense MSR-1.</title>
        <authorList>
            <person name="Wang Q."/>
            <person name="Wu S."/>
            <person name="Li X."/>
            <person name="Zhang T."/>
            <person name="Yang J."/>
            <person name="Wang X."/>
            <person name="Li F."/>
            <person name="Li Y."/>
            <person name="Peng Y."/>
            <person name="Li J."/>
        </authorList>
    </citation>
    <scope>INDUCTION</scope>
    <source>
        <strain>DSM 6361 / JCM 21280 / NBRC 15271 / MSR-1</strain>
    </source>
</reference>
<organism>
    <name type="scientific">Magnetospirillum gryphiswaldense (strain DSM 6361 / JCM 21280 / NBRC 15271 / MSR-1)</name>
    <dbReference type="NCBI Taxonomy" id="431944"/>
    <lineage>
        <taxon>Bacteria</taxon>
        <taxon>Pseudomonadati</taxon>
        <taxon>Pseudomonadota</taxon>
        <taxon>Alphaproteobacteria</taxon>
        <taxon>Rhodospirillales</taxon>
        <taxon>Rhodospirillaceae</taxon>
        <taxon>Magnetospirillum</taxon>
    </lineage>
</organism>
<gene>
    <name evidence="8" type="primary">mms6</name>
    <name type="ordered locus">MGMSRv2__2396</name>
    <name type="ORF">ORF4</name>
</gene>
<proteinExistence type="evidence at protein level"/>